<sequence>MARYRRHSRSRSRSRYRRRRRRRSRHHNRRRTYRRSRRHSRRRRGRRRGYSRRRYSRRGRRRY</sequence>
<proteinExistence type="evidence at transcript level"/>
<comment type="function">
    <text evidence="1">Protamines substitute for histones in the chromatin of sperm during the haploid phase of spermatogenesis. They compact sperm DNA into a highly condensed, stable and inactive complex (By similarity).</text>
</comment>
<comment type="subcellular location">
    <subcellularLocation>
        <location evidence="1">Nucleus</location>
    </subcellularLocation>
    <subcellularLocation>
        <location evidence="1">Chromosome</location>
    </subcellularLocation>
</comment>
<comment type="tissue specificity">
    <text>Testis.</text>
</comment>
<comment type="similarity">
    <text evidence="3">Belongs to the protamine P1 family.</text>
</comment>
<organism>
    <name type="scientific">Sminthopsis leucopus</name>
    <name type="common">White-footed dunnart</name>
    <dbReference type="NCBI Taxonomy" id="90761"/>
    <lineage>
        <taxon>Eukaryota</taxon>
        <taxon>Metazoa</taxon>
        <taxon>Chordata</taxon>
        <taxon>Craniata</taxon>
        <taxon>Vertebrata</taxon>
        <taxon>Euteleostomi</taxon>
        <taxon>Mammalia</taxon>
        <taxon>Metatheria</taxon>
        <taxon>Dasyuromorphia</taxon>
        <taxon>Dasyuridae</taxon>
        <taxon>Sminthopsis</taxon>
    </lineage>
</organism>
<gene>
    <name type="primary">PRM1</name>
</gene>
<evidence type="ECO:0000250" key="1"/>
<evidence type="ECO:0000256" key="2">
    <source>
        <dbReference type="SAM" id="MobiDB-lite"/>
    </source>
</evidence>
<evidence type="ECO:0000305" key="3"/>
<protein>
    <recommendedName>
        <fullName>Sperm protamine P1</fullName>
    </recommendedName>
</protein>
<reference key="1">
    <citation type="journal article" date="1999" name="Mol. Phylogenet. Evol.">
        <title>Systematic relationships within the dasyurid marsupial tribe Sminthopsini -- a multigene approach.</title>
        <authorList>
            <person name="Blacket M.J."/>
            <person name="Krajewski C."/>
            <person name="Labrinidis A."/>
            <person name="Cambron B."/>
            <person name="Cooper S."/>
            <person name="Westerman M."/>
        </authorList>
    </citation>
    <scope>NUCLEOTIDE SEQUENCE [GENOMIC DNA]</scope>
</reference>
<keyword id="KW-0158">Chromosome</keyword>
<keyword id="KW-0217">Developmental protein</keyword>
<keyword id="KW-0221">Differentiation</keyword>
<keyword id="KW-0226">DNA condensation</keyword>
<keyword id="KW-0238">DNA-binding</keyword>
<keyword id="KW-0544">Nucleosome core</keyword>
<keyword id="KW-0539">Nucleus</keyword>
<keyword id="KW-0744">Spermatogenesis</keyword>
<name>HSP1_SMILE</name>
<dbReference type="EMBL" id="AF089880">
    <property type="protein sequence ID" value="AAD55339.1"/>
    <property type="molecule type" value="Genomic_DNA"/>
</dbReference>
<dbReference type="GO" id="GO:0000786">
    <property type="term" value="C:nucleosome"/>
    <property type="evidence" value="ECO:0007669"/>
    <property type="project" value="UniProtKB-KW"/>
</dbReference>
<dbReference type="GO" id="GO:0005634">
    <property type="term" value="C:nucleus"/>
    <property type="evidence" value="ECO:0007669"/>
    <property type="project" value="UniProtKB-SubCell"/>
</dbReference>
<dbReference type="GO" id="GO:0003677">
    <property type="term" value="F:DNA binding"/>
    <property type="evidence" value="ECO:0007669"/>
    <property type="project" value="UniProtKB-KW"/>
</dbReference>
<dbReference type="GO" id="GO:0030261">
    <property type="term" value="P:chromosome condensation"/>
    <property type="evidence" value="ECO:0007669"/>
    <property type="project" value="UniProtKB-KW"/>
</dbReference>
<dbReference type="GO" id="GO:0035092">
    <property type="term" value="P:sperm DNA condensation"/>
    <property type="evidence" value="ECO:0007669"/>
    <property type="project" value="InterPro"/>
</dbReference>
<dbReference type="InterPro" id="IPR000221">
    <property type="entry name" value="Protamine_P1"/>
</dbReference>
<dbReference type="PROSITE" id="PS00048">
    <property type="entry name" value="PROTAMINE_P1"/>
    <property type="match status" value="1"/>
</dbReference>
<accession>Q71UG2</accession>
<feature type="chain" id="PRO_0000191568" description="Sperm protamine P1">
    <location>
        <begin position="1"/>
        <end position="63"/>
    </location>
</feature>
<feature type="region of interest" description="Disordered" evidence="2">
    <location>
        <begin position="1"/>
        <end position="63"/>
    </location>
</feature>